<gene>
    <name evidence="1" type="primary">atpE</name>
    <name type="ordered locus">Shewmr4_3930</name>
</gene>
<name>ATPL_SHESM</name>
<reference key="1">
    <citation type="submission" date="2006-08" db="EMBL/GenBank/DDBJ databases">
        <title>Complete sequence of Shewanella sp. MR-4.</title>
        <authorList>
            <consortium name="US DOE Joint Genome Institute"/>
            <person name="Copeland A."/>
            <person name="Lucas S."/>
            <person name="Lapidus A."/>
            <person name="Barry K."/>
            <person name="Detter J.C."/>
            <person name="Glavina del Rio T."/>
            <person name="Hammon N."/>
            <person name="Israni S."/>
            <person name="Dalin E."/>
            <person name="Tice H."/>
            <person name="Pitluck S."/>
            <person name="Kiss H."/>
            <person name="Brettin T."/>
            <person name="Bruce D."/>
            <person name="Han C."/>
            <person name="Tapia R."/>
            <person name="Gilna P."/>
            <person name="Schmutz J."/>
            <person name="Larimer F."/>
            <person name="Land M."/>
            <person name="Hauser L."/>
            <person name="Kyrpides N."/>
            <person name="Mikhailova N."/>
            <person name="Nealson K."/>
            <person name="Konstantinidis K."/>
            <person name="Klappenbach J."/>
            <person name="Tiedje J."/>
            <person name="Richardson P."/>
        </authorList>
    </citation>
    <scope>NUCLEOTIDE SEQUENCE [LARGE SCALE GENOMIC DNA]</scope>
    <source>
        <strain>MR-4</strain>
    </source>
</reference>
<organism>
    <name type="scientific">Shewanella sp. (strain MR-4)</name>
    <dbReference type="NCBI Taxonomy" id="60480"/>
    <lineage>
        <taxon>Bacteria</taxon>
        <taxon>Pseudomonadati</taxon>
        <taxon>Pseudomonadota</taxon>
        <taxon>Gammaproteobacteria</taxon>
        <taxon>Alteromonadales</taxon>
        <taxon>Shewanellaceae</taxon>
        <taxon>Shewanella</taxon>
    </lineage>
</organism>
<sequence>METILGMTAIAVALLIGMGALGTAIGFGLLGGKFLEGAARQPEMAPMLQVKMFIVAGLLDAVTMIGVGIALFMLFTNPLGAML</sequence>
<accession>Q0HD74</accession>
<keyword id="KW-0066">ATP synthesis</keyword>
<keyword id="KW-0997">Cell inner membrane</keyword>
<keyword id="KW-1003">Cell membrane</keyword>
<keyword id="KW-0138">CF(0)</keyword>
<keyword id="KW-0375">Hydrogen ion transport</keyword>
<keyword id="KW-0406">Ion transport</keyword>
<keyword id="KW-0446">Lipid-binding</keyword>
<keyword id="KW-0472">Membrane</keyword>
<keyword id="KW-0812">Transmembrane</keyword>
<keyword id="KW-1133">Transmembrane helix</keyword>
<keyword id="KW-0813">Transport</keyword>
<dbReference type="EMBL" id="CP000446">
    <property type="protein sequence ID" value="ABI40993.1"/>
    <property type="molecule type" value="Genomic_DNA"/>
</dbReference>
<dbReference type="RefSeq" id="WP_006083840.1">
    <property type="nucleotide sequence ID" value="NC_008321.1"/>
</dbReference>
<dbReference type="SMR" id="Q0HD74"/>
<dbReference type="GeneID" id="94725963"/>
<dbReference type="KEGG" id="she:Shewmr4_3930"/>
<dbReference type="HOGENOM" id="CLU_148047_1_0_6"/>
<dbReference type="GO" id="GO:0005886">
    <property type="term" value="C:plasma membrane"/>
    <property type="evidence" value="ECO:0007669"/>
    <property type="project" value="UniProtKB-SubCell"/>
</dbReference>
<dbReference type="GO" id="GO:0045259">
    <property type="term" value="C:proton-transporting ATP synthase complex"/>
    <property type="evidence" value="ECO:0007669"/>
    <property type="project" value="UniProtKB-KW"/>
</dbReference>
<dbReference type="GO" id="GO:0033177">
    <property type="term" value="C:proton-transporting two-sector ATPase complex, proton-transporting domain"/>
    <property type="evidence" value="ECO:0007669"/>
    <property type="project" value="InterPro"/>
</dbReference>
<dbReference type="GO" id="GO:0008289">
    <property type="term" value="F:lipid binding"/>
    <property type="evidence" value="ECO:0007669"/>
    <property type="project" value="UniProtKB-KW"/>
</dbReference>
<dbReference type="GO" id="GO:0046933">
    <property type="term" value="F:proton-transporting ATP synthase activity, rotational mechanism"/>
    <property type="evidence" value="ECO:0007669"/>
    <property type="project" value="UniProtKB-UniRule"/>
</dbReference>
<dbReference type="CDD" id="cd18185">
    <property type="entry name" value="ATP-synt_Fo_c_ATPE"/>
    <property type="match status" value="1"/>
</dbReference>
<dbReference type="FunFam" id="1.20.20.10:FF:000002">
    <property type="entry name" value="ATP synthase subunit c"/>
    <property type="match status" value="1"/>
</dbReference>
<dbReference type="Gene3D" id="1.20.20.10">
    <property type="entry name" value="F1F0 ATP synthase subunit C"/>
    <property type="match status" value="1"/>
</dbReference>
<dbReference type="HAMAP" id="MF_01396">
    <property type="entry name" value="ATP_synth_c_bact"/>
    <property type="match status" value="1"/>
</dbReference>
<dbReference type="InterPro" id="IPR005953">
    <property type="entry name" value="ATP_synth_csu_bac/chlpt"/>
</dbReference>
<dbReference type="InterPro" id="IPR000454">
    <property type="entry name" value="ATP_synth_F0_csu"/>
</dbReference>
<dbReference type="InterPro" id="IPR020537">
    <property type="entry name" value="ATP_synth_F0_csu_DDCD_BS"/>
</dbReference>
<dbReference type="InterPro" id="IPR038662">
    <property type="entry name" value="ATP_synth_F0_csu_sf"/>
</dbReference>
<dbReference type="InterPro" id="IPR002379">
    <property type="entry name" value="ATPase_proteolipid_c-like_dom"/>
</dbReference>
<dbReference type="InterPro" id="IPR035921">
    <property type="entry name" value="F/V-ATP_Csub_sf"/>
</dbReference>
<dbReference type="NCBIfam" id="TIGR01260">
    <property type="entry name" value="ATP_synt_c"/>
    <property type="match status" value="1"/>
</dbReference>
<dbReference type="NCBIfam" id="NF005363">
    <property type="entry name" value="PRK06876.1"/>
    <property type="match status" value="1"/>
</dbReference>
<dbReference type="Pfam" id="PF00137">
    <property type="entry name" value="ATP-synt_C"/>
    <property type="match status" value="1"/>
</dbReference>
<dbReference type="PRINTS" id="PR00124">
    <property type="entry name" value="ATPASEC"/>
</dbReference>
<dbReference type="SUPFAM" id="SSF81333">
    <property type="entry name" value="F1F0 ATP synthase subunit C"/>
    <property type="match status" value="1"/>
</dbReference>
<dbReference type="PROSITE" id="PS00605">
    <property type="entry name" value="ATPASE_C"/>
    <property type="match status" value="1"/>
</dbReference>
<comment type="function">
    <text evidence="1">F(1)F(0) ATP synthase produces ATP from ADP in the presence of a proton or sodium gradient. F-type ATPases consist of two structural domains, F(1) containing the extramembraneous catalytic core and F(0) containing the membrane proton channel, linked together by a central stalk and a peripheral stalk. During catalysis, ATP synthesis in the catalytic domain of F(1) is coupled via a rotary mechanism of the central stalk subunits to proton translocation.</text>
</comment>
<comment type="function">
    <text evidence="1">Key component of the F(0) channel; it plays a direct role in translocation across the membrane. A homomeric c-ring of between 10-14 subunits forms the central stalk rotor element with the F(1) delta and epsilon subunits.</text>
</comment>
<comment type="subunit">
    <text evidence="1">F-type ATPases have 2 components, F(1) - the catalytic core - and F(0) - the membrane proton channel. F(1) has five subunits: alpha(3), beta(3), gamma(1), delta(1), epsilon(1). F(0) has three main subunits: a(1), b(2) and c(10-14). The alpha and beta chains form an alternating ring which encloses part of the gamma chain. F(1) is attached to F(0) by a central stalk formed by the gamma and epsilon chains, while a peripheral stalk is formed by the delta and b chains.</text>
</comment>
<comment type="subcellular location">
    <subcellularLocation>
        <location evidence="1">Cell inner membrane</location>
        <topology evidence="1">Multi-pass membrane protein</topology>
    </subcellularLocation>
</comment>
<comment type="similarity">
    <text evidence="1">Belongs to the ATPase C chain family.</text>
</comment>
<feature type="chain" id="PRO_1000184481" description="ATP synthase subunit c">
    <location>
        <begin position="1"/>
        <end position="83"/>
    </location>
</feature>
<feature type="transmembrane region" description="Helical" evidence="1">
    <location>
        <begin position="10"/>
        <end position="30"/>
    </location>
</feature>
<feature type="transmembrane region" description="Helical" evidence="1">
    <location>
        <begin position="52"/>
        <end position="72"/>
    </location>
</feature>
<feature type="site" description="Reversibly protonated during proton transport" evidence="1">
    <location>
        <position position="60"/>
    </location>
</feature>
<evidence type="ECO:0000255" key="1">
    <source>
        <dbReference type="HAMAP-Rule" id="MF_01396"/>
    </source>
</evidence>
<protein>
    <recommendedName>
        <fullName evidence="1">ATP synthase subunit c</fullName>
    </recommendedName>
    <alternativeName>
        <fullName evidence="1">ATP synthase F(0) sector subunit c</fullName>
    </alternativeName>
    <alternativeName>
        <fullName evidence="1">F-type ATPase subunit c</fullName>
        <shortName evidence="1">F-ATPase subunit c</shortName>
    </alternativeName>
    <alternativeName>
        <fullName evidence="1">Lipid-binding protein</fullName>
    </alternativeName>
</protein>
<proteinExistence type="inferred from homology"/>